<feature type="chain" id="PRO_0000147803" description="Phosphoglucomutase, cytoplasmic">
    <location>
        <begin position="1"/>
        <end position="583"/>
    </location>
</feature>
<feature type="region of interest" description="Disordered" evidence="4">
    <location>
        <begin position="1"/>
        <end position="20"/>
    </location>
</feature>
<feature type="active site" description="Phosphoserine intermediate" evidence="1">
    <location>
        <position position="124"/>
    </location>
</feature>
<feature type="binding site" evidence="1">
    <location>
        <position position="25"/>
    </location>
    <ligand>
        <name>alpha-D-glucose 1,6-bisphosphate</name>
        <dbReference type="ChEBI" id="CHEBI:58392"/>
    </ligand>
</feature>
<feature type="binding site" evidence="1">
    <location>
        <position position="124"/>
    </location>
    <ligand>
        <name>alpha-D-glucose 1,6-bisphosphate</name>
        <dbReference type="ChEBI" id="CHEBI:58392"/>
    </ligand>
</feature>
<feature type="binding site" description="via phosphate group" evidence="1">
    <location>
        <position position="124"/>
    </location>
    <ligand>
        <name>Mg(2+)</name>
        <dbReference type="ChEBI" id="CHEBI:18420"/>
    </ligand>
</feature>
<feature type="binding site" evidence="1">
    <location>
        <position position="300"/>
    </location>
    <ligand>
        <name>Mg(2+)</name>
        <dbReference type="ChEBI" id="CHEBI:18420"/>
    </ligand>
</feature>
<feature type="binding site" evidence="1">
    <location>
        <position position="302"/>
    </location>
    <ligand>
        <name>Mg(2+)</name>
        <dbReference type="ChEBI" id="CHEBI:18420"/>
    </ligand>
</feature>
<feature type="binding site" evidence="1">
    <location>
        <position position="304"/>
    </location>
    <ligand>
        <name>alpha-D-glucose 1,6-bisphosphate</name>
        <dbReference type="ChEBI" id="CHEBI:58392"/>
    </ligand>
</feature>
<feature type="binding site" evidence="1">
    <location>
        <position position="304"/>
    </location>
    <ligand>
        <name>Mg(2+)</name>
        <dbReference type="ChEBI" id="CHEBI:18420"/>
    </ligand>
</feature>
<feature type="binding site" evidence="1">
    <location>
        <position position="305"/>
    </location>
    <ligand>
        <name>alpha-D-glucose 1,6-bisphosphate</name>
        <dbReference type="ChEBI" id="CHEBI:58392"/>
    </ligand>
</feature>
<feature type="binding site" evidence="1">
    <location>
        <position position="368"/>
    </location>
    <ligand>
        <name>alpha-D-glucose 1,6-bisphosphate</name>
        <dbReference type="ChEBI" id="CHEBI:58392"/>
    </ligand>
</feature>
<feature type="binding site" evidence="1">
    <location>
        <position position="387"/>
    </location>
    <ligand>
        <name>alpha-D-glucose 1,6-bisphosphate</name>
        <dbReference type="ChEBI" id="CHEBI:58392"/>
    </ligand>
</feature>
<feature type="binding site" evidence="1">
    <location>
        <position position="389"/>
    </location>
    <ligand>
        <name>alpha-D-glucose 1,6-bisphosphate</name>
        <dbReference type="ChEBI" id="CHEBI:58392"/>
    </ligand>
</feature>
<feature type="binding site" evidence="1">
    <location>
        <position position="400"/>
    </location>
    <ligand>
        <name>alpha-D-glucose 1,6-bisphosphate</name>
        <dbReference type="ChEBI" id="CHEBI:58392"/>
    </ligand>
</feature>
<feature type="modified residue" description="Phosphoserine" evidence="1">
    <location>
        <position position="124"/>
    </location>
</feature>
<organism>
    <name type="scientific">Mesembryanthemum crystallinum</name>
    <name type="common">Common ice plant</name>
    <name type="synonym">Cryophytum crystallinum</name>
    <dbReference type="NCBI Taxonomy" id="3544"/>
    <lineage>
        <taxon>Eukaryota</taxon>
        <taxon>Viridiplantae</taxon>
        <taxon>Streptophyta</taxon>
        <taxon>Embryophyta</taxon>
        <taxon>Tracheophyta</taxon>
        <taxon>Spermatophyta</taxon>
        <taxon>Magnoliopsida</taxon>
        <taxon>eudicotyledons</taxon>
        <taxon>Gunneridae</taxon>
        <taxon>Pentapetalae</taxon>
        <taxon>Caryophyllales</taxon>
        <taxon>Aizoaceae</taxon>
        <taxon>Mesembryanthemum</taxon>
        <taxon>Mesembryanthemum subgen. Cryophytum</taxon>
    </lineage>
</organism>
<keyword id="KW-0119">Carbohydrate metabolism</keyword>
<keyword id="KW-0963">Cytoplasm</keyword>
<keyword id="KW-0313">Glucose metabolism</keyword>
<keyword id="KW-0413">Isomerase</keyword>
<keyword id="KW-0460">Magnesium</keyword>
<keyword id="KW-0479">Metal-binding</keyword>
<keyword id="KW-0597">Phosphoprotein</keyword>
<name>PGMC_MESCR</name>
<protein>
    <recommendedName>
        <fullName>Phosphoglucomutase, cytoplasmic</fullName>
        <shortName>PGM</shortName>
        <ecNumber evidence="3">5.4.2.2</ecNumber>
    </recommendedName>
    <alternativeName>
        <fullName>Glucose phosphomutase</fullName>
    </alternativeName>
</protein>
<comment type="function">
    <text evidence="2 3">Catalyzes the reversible isomerization of alpha-D-glucose 1-phosphate to alpha-D-glucose 6-phosphate (By similarity). The mechanism proceeds via the intermediate compound alpha-D-glucose 1,6-bisphosphate (By similarity). This enzyme participates in both the breakdown and synthesis of glucose (By similarity).</text>
</comment>
<comment type="catalytic activity">
    <reaction evidence="3">
        <text>alpha-D-glucose 1-phosphate = alpha-D-glucose 6-phosphate</text>
        <dbReference type="Rhea" id="RHEA:23536"/>
        <dbReference type="ChEBI" id="CHEBI:58225"/>
        <dbReference type="ChEBI" id="CHEBI:58601"/>
        <dbReference type="EC" id="5.4.2.2"/>
    </reaction>
</comment>
<comment type="catalytic activity">
    <reaction evidence="3">
        <text>O-phospho-L-seryl-[protein] + alpha-D-glucose 1-phosphate = alpha-D-glucose 1,6-bisphosphate + L-seryl-[protein]</text>
        <dbReference type="Rhea" id="RHEA:68748"/>
        <dbReference type="Rhea" id="RHEA-COMP:9863"/>
        <dbReference type="Rhea" id="RHEA-COMP:11604"/>
        <dbReference type="ChEBI" id="CHEBI:29999"/>
        <dbReference type="ChEBI" id="CHEBI:58392"/>
        <dbReference type="ChEBI" id="CHEBI:58601"/>
        <dbReference type="ChEBI" id="CHEBI:83421"/>
    </reaction>
</comment>
<comment type="catalytic activity">
    <reaction evidence="3">
        <text>alpha-D-glucose 1,6-bisphosphate + L-seryl-[protein] = O-phospho-L-seryl-[protein] + alpha-D-glucose 6-phosphate</text>
        <dbReference type="Rhea" id="RHEA:68752"/>
        <dbReference type="Rhea" id="RHEA-COMP:9863"/>
        <dbReference type="Rhea" id="RHEA-COMP:11604"/>
        <dbReference type="ChEBI" id="CHEBI:29999"/>
        <dbReference type="ChEBI" id="CHEBI:58225"/>
        <dbReference type="ChEBI" id="CHEBI:58392"/>
        <dbReference type="ChEBI" id="CHEBI:83421"/>
    </reaction>
</comment>
<comment type="cofactor">
    <cofactor evidence="1">
        <name>Mg(2+)</name>
        <dbReference type="ChEBI" id="CHEBI:18420"/>
    </cofactor>
    <text evidence="1">Binds 1 Mg(2+) ion per subunit.</text>
</comment>
<comment type="subunit">
    <text evidence="1">Monomer.</text>
</comment>
<comment type="subcellular location">
    <subcellularLocation>
        <location evidence="3">Cytoplasm</location>
    </subcellularLocation>
</comment>
<comment type="similarity">
    <text evidence="5">Belongs to the phosphohexose mutase family.</text>
</comment>
<sequence length="583" mass="63446">MATFKVSRVETKPYDGQKPGTSGLRKKVKVFAQPHYLENFVQSTFDALTADKIKGKTLVVSGDGRYYSEQAIQTIIKMSAANGVKSVWVGQDGLLSTPAVSAVIRERVGKDGSKASGAFILTASHNPGGPNEDFGIKYNMENGGPAQEGVTNKIYENTTTIKEYLIAKELPNVNISKTGVTSFSGPDGQFDVEVFDATETYVKLMKSIFDFQAIKKLLSIPSFTFCYDALHGVAGVYAKRIFVDELGANESSLLNCTPKEDFGGGHPDPNLTYAKELVERMGLGKSNTQGEPPEFGAAADGDADRNMILGKRFFVTPSDSVAIIAANAVEAIPYFSGGLKGVARSMPTSAALDVVAKHLNLKFFEVPTGWKFFGNLMDAGVCSICGEESFGTGSDHVREKDGIWAVLAWLSILAHKNKDNLNGEKLVTVEDIVCQHWATYGRHYYTRYDYENVDAGGAKELMAYLVNLQSDLSKVNNIVKGVHSGVANVIAADEFEYKDPVDGSVSKHQGIRYMFEDGSRLIFRLSGTGSEGATIRLYIEQYEKDSSKTGRDSQEALKPLVDVALKLSKMQEFSGRSEPTVIT</sequence>
<dbReference type="EC" id="5.4.2.2" evidence="3"/>
<dbReference type="EMBL" id="U84888">
    <property type="protein sequence ID" value="AAB41895.1"/>
    <property type="molecule type" value="mRNA"/>
</dbReference>
<dbReference type="PIR" id="T12574">
    <property type="entry name" value="T12574"/>
</dbReference>
<dbReference type="SMR" id="P93262"/>
<dbReference type="GO" id="GO:0005829">
    <property type="term" value="C:cytosol"/>
    <property type="evidence" value="ECO:0007669"/>
    <property type="project" value="TreeGrafter"/>
</dbReference>
<dbReference type="GO" id="GO:0000287">
    <property type="term" value="F:magnesium ion binding"/>
    <property type="evidence" value="ECO:0007669"/>
    <property type="project" value="InterPro"/>
</dbReference>
<dbReference type="GO" id="GO:0004614">
    <property type="term" value="F:phosphoglucomutase activity"/>
    <property type="evidence" value="ECO:0007669"/>
    <property type="project" value="UniProtKB-EC"/>
</dbReference>
<dbReference type="GO" id="GO:0006006">
    <property type="term" value="P:glucose metabolic process"/>
    <property type="evidence" value="ECO:0007669"/>
    <property type="project" value="UniProtKB-KW"/>
</dbReference>
<dbReference type="CDD" id="cd03085">
    <property type="entry name" value="PGM1"/>
    <property type="match status" value="1"/>
</dbReference>
<dbReference type="FunFam" id="3.30.310.50:FF:000002">
    <property type="entry name" value="Phosphoglucomutase 5"/>
    <property type="match status" value="1"/>
</dbReference>
<dbReference type="FunFam" id="3.40.120.10:FF:000004">
    <property type="entry name" value="Phosphoglucomutase 5"/>
    <property type="match status" value="1"/>
</dbReference>
<dbReference type="FunFam" id="3.40.120.10:FF:000005">
    <property type="entry name" value="Phosphoglucomutase 5"/>
    <property type="match status" value="1"/>
</dbReference>
<dbReference type="FunFam" id="3.40.120.10:FF:000009">
    <property type="entry name" value="Phosphoglucomutase, cytoplasmic 1"/>
    <property type="match status" value="1"/>
</dbReference>
<dbReference type="Gene3D" id="3.40.120.10">
    <property type="entry name" value="Alpha-D-Glucose-1,6-Bisphosphate, subunit A, domain 3"/>
    <property type="match status" value="3"/>
</dbReference>
<dbReference type="Gene3D" id="3.30.310.50">
    <property type="entry name" value="Alpha-D-phosphohexomutase, C-terminal domain"/>
    <property type="match status" value="1"/>
</dbReference>
<dbReference type="InterPro" id="IPR005844">
    <property type="entry name" value="A-D-PHexomutase_a/b/a-I"/>
</dbReference>
<dbReference type="InterPro" id="IPR016055">
    <property type="entry name" value="A-D-PHexomutase_a/b/a-I/II/III"/>
</dbReference>
<dbReference type="InterPro" id="IPR005845">
    <property type="entry name" value="A-D-PHexomutase_a/b/a-II"/>
</dbReference>
<dbReference type="InterPro" id="IPR005846">
    <property type="entry name" value="A-D-PHexomutase_a/b/a-III"/>
</dbReference>
<dbReference type="InterPro" id="IPR036900">
    <property type="entry name" value="A-D-PHexomutase_C_sf"/>
</dbReference>
<dbReference type="InterPro" id="IPR016066">
    <property type="entry name" value="A-D-PHexomutase_CS"/>
</dbReference>
<dbReference type="InterPro" id="IPR005841">
    <property type="entry name" value="Alpha-D-phosphohexomutase_SF"/>
</dbReference>
<dbReference type="InterPro" id="IPR045244">
    <property type="entry name" value="PGM"/>
</dbReference>
<dbReference type="NCBIfam" id="NF005737">
    <property type="entry name" value="PRK07564.1-1"/>
    <property type="match status" value="1"/>
</dbReference>
<dbReference type="PANTHER" id="PTHR22573:SF2">
    <property type="entry name" value="PHOSPHOGLUCOMUTASE"/>
    <property type="match status" value="1"/>
</dbReference>
<dbReference type="PANTHER" id="PTHR22573">
    <property type="entry name" value="PHOSPHOHEXOMUTASE FAMILY MEMBER"/>
    <property type="match status" value="1"/>
</dbReference>
<dbReference type="Pfam" id="PF24947">
    <property type="entry name" value="PGM1_C_vert_fung"/>
    <property type="match status" value="1"/>
</dbReference>
<dbReference type="Pfam" id="PF02878">
    <property type="entry name" value="PGM_PMM_I"/>
    <property type="match status" value="1"/>
</dbReference>
<dbReference type="Pfam" id="PF02879">
    <property type="entry name" value="PGM_PMM_II"/>
    <property type="match status" value="1"/>
</dbReference>
<dbReference type="Pfam" id="PF02880">
    <property type="entry name" value="PGM_PMM_III"/>
    <property type="match status" value="1"/>
</dbReference>
<dbReference type="PRINTS" id="PR00509">
    <property type="entry name" value="PGMPMM"/>
</dbReference>
<dbReference type="SUPFAM" id="SSF55957">
    <property type="entry name" value="Phosphoglucomutase, C-terminal domain"/>
    <property type="match status" value="1"/>
</dbReference>
<dbReference type="SUPFAM" id="SSF53738">
    <property type="entry name" value="Phosphoglucomutase, first 3 domains"/>
    <property type="match status" value="3"/>
</dbReference>
<dbReference type="PROSITE" id="PS00710">
    <property type="entry name" value="PGM_PMM"/>
    <property type="match status" value="1"/>
</dbReference>
<accession>P93262</accession>
<proteinExistence type="evidence at transcript level"/>
<evidence type="ECO:0000250" key="1">
    <source>
        <dbReference type="UniProtKB" id="P00949"/>
    </source>
</evidence>
<evidence type="ECO:0000250" key="2">
    <source>
        <dbReference type="UniProtKB" id="P36871"/>
    </source>
</evidence>
<evidence type="ECO:0000250" key="3">
    <source>
        <dbReference type="UniProtKB" id="P93804"/>
    </source>
</evidence>
<evidence type="ECO:0000256" key="4">
    <source>
        <dbReference type="SAM" id="MobiDB-lite"/>
    </source>
</evidence>
<evidence type="ECO:0000305" key="5"/>
<reference key="1">
    <citation type="submission" date="1997-01" db="EMBL/GenBank/DDBJ databases">
        <authorList>
            <person name="Michalowski C.B."/>
            <person name="Quigley-Landreau F."/>
            <person name="Bohnert H.J."/>
        </authorList>
    </citation>
    <scope>NUCLEOTIDE SEQUENCE [MRNA]</scope>
</reference>
<gene>
    <name type="primary">PGM1</name>
</gene>